<protein>
    <recommendedName>
        <fullName>Envelope glycoprotein GP350</fullName>
    </recommendedName>
    <alternativeName>
        <fullName>Membrane antigen</fullName>
        <shortName>MA</shortName>
    </alternativeName>
</protein>
<feature type="chain" id="PRO_0000408265" description="Envelope glycoprotein GP350">
    <location>
        <begin position="1"/>
        <end position="856"/>
    </location>
</feature>
<feature type="topological domain" description="Virion surface" evidence="2">
    <location>
        <begin position="1"/>
        <end position="809"/>
    </location>
</feature>
<feature type="transmembrane region" description="Helical" evidence="2">
    <location>
        <begin position="810"/>
        <end position="830"/>
    </location>
</feature>
<feature type="topological domain" description="Intravirion" evidence="2">
    <location>
        <begin position="831"/>
        <end position="856"/>
    </location>
</feature>
<feature type="region of interest" description="Disordered" evidence="3">
    <location>
        <begin position="421"/>
        <end position="779"/>
    </location>
</feature>
<feature type="compositionally biased region" description="Low complexity" evidence="3">
    <location>
        <begin position="427"/>
        <end position="437"/>
    </location>
</feature>
<feature type="compositionally biased region" description="Polar residues" evidence="3">
    <location>
        <begin position="442"/>
        <end position="488"/>
    </location>
</feature>
<feature type="compositionally biased region" description="Low complexity" evidence="3">
    <location>
        <begin position="507"/>
        <end position="570"/>
    </location>
</feature>
<feature type="compositionally biased region" description="Polar residues" evidence="3">
    <location>
        <begin position="575"/>
        <end position="616"/>
    </location>
</feature>
<feature type="compositionally biased region" description="Low complexity" evidence="3">
    <location>
        <begin position="617"/>
        <end position="631"/>
    </location>
</feature>
<feature type="compositionally biased region" description="Low complexity" evidence="3">
    <location>
        <begin position="654"/>
        <end position="669"/>
    </location>
</feature>
<feature type="compositionally biased region" description="Polar residues" evidence="3">
    <location>
        <begin position="674"/>
        <end position="690"/>
    </location>
</feature>
<feature type="compositionally biased region" description="Polar residues" evidence="3">
    <location>
        <begin position="703"/>
        <end position="730"/>
    </location>
</feature>
<feature type="compositionally biased region" description="Low complexity" evidence="3">
    <location>
        <begin position="731"/>
        <end position="741"/>
    </location>
</feature>
<feature type="compositionally biased region" description="Polar residues" evidence="3">
    <location>
        <begin position="743"/>
        <end position="776"/>
    </location>
</feature>
<feature type="glycosylation site" description="N-linked (GlcNAc...) asparagine; by host" evidence="2">
    <location>
        <position position="47"/>
    </location>
</feature>
<feature type="glycosylation site" description="N-linked (GlcNAc...) asparagine; by host" evidence="2">
    <location>
        <position position="87"/>
    </location>
</feature>
<feature type="glycosylation site" description="N-linked (GlcNAc...) asparagine; by host" evidence="2">
    <location>
        <position position="114"/>
    </location>
</feature>
<feature type="glycosylation site" description="N-linked (GlcNAc...) asparagine; by host" evidence="2">
    <location>
        <position position="166"/>
    </location>
</feature>
<feature type="glycosylation site" description="N-linked (GlcNAc...) asparagine; by host" evidence="2">
    <location>
        <position position="169"/>
    </location>
</feature>
<feature type="glycosylation site" description="N-linked (GlcNAc...) asparagine; by host" evidence="2">
    <location>
        <position position="195"/>
    </location>
</feature>
<feature type="glycosylation site" description="N-linked (GlcNAc...) asparagine; by host" evidence="2">
    <location>
        <position position="229"/>
    </location>
</feature>
<feature type="glycosylation site" description="N-linked (GlcNAc...) asparagine; by host" evidence="2">
    <location>
        <position position="277"/>
    </location>
</feature>
<feature type="glycosylation site" description="N-linked (GlcNAc...) asparagine; by host" evidence="2">
    <location>
        <position position="318"/>
    </location>
</feature>
<feature type="glycosylation site" description="N-linked (GlcNAc...) asparagine; by host" evidence="2">
    <location>
        <position position="328"/>
    </location>
</feature>
<feature type="glycosylation site" description="N-linked (GlcNAc...) asparagine; by host" evidence="2">
    <location>
        <position position="345"/>
    </location>
</feature>
<feature type="glycosylation site" description="N-linked (GlcNAc...) asparagine; by host" evidence="2">
    <location>
        <position position="356"/>
    </location>
</feature>
<feature type="glycosylation site" description="N-linked (GlcNAc...) asparagine; by host" evidence="2">
    <location>
        <position position="378"/>
    </location>
</feature>
<feature type="glycosylation site" description="N-linked (GlcNAc...) asparagine; by host" evidence="2">
    <location>
        <position position="386"/>
    </location>
</feature>
<feature type="glycosylation site" description="N-linked (GlcNAc...) asparagine; by host" evidence="2">
    <location>
        <position position="411"/>
    </location>
</feature>
<feature type="glycosylation site" description="N-linked (GlcNAc...) asparagine; by host" evidence="2">
    <location>
        <position position="435"/>
    </location>
</feature>
<feature type="glycosylation site" description="N-linked (GlcNAc...) asparagine; by host" evidence="2">
    <location>
        <position position="443"/>
    </location>
</feature>
<feature type="glycosylation site" description="N-linked (GlcNAc...) asparagine; by host" evidence="2">
    <location>
        <position position="457"/>
    </location>
</feature>
<feature type="glycosylation site" description="N-linked (GlcNAc...) asparagine; by host" evidence="2">
    <location>
        <position position="497"/>
    </location>
</feature>
<feature type="glycosylation site" description="N-linked (GlcNAc...) asparagine; by host" evidence="2">
    <location>
        <position position="519"/>
    </location>
</feature>
<feature type="glycosylation site" description="N-linked (GlcNAc...) asparagine; by host" evidence="2">
    <location>
        <position position="533"/>
    </location>
</feature>
<feature type="glycosylation site" description="N-linked (GlcNAc...) asparagine; by host" evidence="2">
    <location>
        <position position="554"/>
    </location>
</feature>
<feature type="glycosylation site" description="N-linked (GlcNAc...) asparagine; by host" evidence="2">
    <location>
        <position position="568"/>
    </location>
</feature>
<feature type="glycosylation site" description="N-linked (GlcNAc...) asparagine; by host" evidence="2">
    <location>
        <position position="582"/>
    </location>
</feature>
<feature type="glycosylation site" description="N-linked (GlcNAc...) asparagine; by host" evidence="2">
    <location>
        <position position="585"/>
    </location>
</feature>
<feature type="glycosylation site" description="N-linked (GlcNAc...) asparagine; by host" evidence="2">
    <location>
        <position position="603"/>
    </location>
</feature>
<feature type="glycosylation site" description="N-linked (GlcNAc...) asparagine; by host" evidence="2">
    <location>
        <position position="614"/>
    </location>
</feature>
<feature type="glycosylation site" description="N-linked (GlcNAc...) asparagine; by host" evidence="2">
    <location>
        <position position="650"/>
    </location>
</feature>
<feature type="glycosylation site" description="N-linked (GlcNAc...) asparagine; by host" evidence="2">
    <location>
        <position position="684"/>
    </location>
</feature>
<feature type="glycosylation site" description="N-linked (GlcNAc...) asparagine; by host" evidence="2">
    <location>
        <position position="695"/>
    </location>
</feature>
<feature type="glycosylation site" description="N-linked (GlcNAc...) asparagine; by host" evidence="2">
    <location>
        <position position="704"/>
    </location>
</feature>
<feature type="glycosylation site" description="N-linked (GlcNAc...) asparagine; by host" evidence="2">
    <location>
        <position position="729"/>
    </location>
</feature>
<feature type="glycosylation site" description="N-linked (GlcNAc...) asparagine; by host" evidence="2">
    <location>
        <position position="764"/>
    </location>
</feature>
<feature type="glycosylation site" description="N-linked (GlcNAc...) asparagine; by host" evidence="2">
    <location>
        <position position="807"/>
    </location>
</feature>
<feature type="splice variant" id="VSP_041036" description="In isoform GP220." evidence="4">
    <location>
        <begin position="502"/>
        <end position="699"/>
    </location>
</feature>
<reference key="1">
    <citation type="journal article" date="2005" name="J. Virol.">
        <title>Genomic sequence analysis of Epstein-Barr virus strain GD1 from a nasopharyngeal carcinoma patient.</title>
        <authorList>
            <person name="Zeng M.-S."/>
            <person name="Li D.-J."/>
            <person name="Liu Q.-L."/>
            <person name="Song L.-B."/>
            <person name="Li M.-Z."/>
            <person name="Zhang R.-H."/>
            <person name="Yu X.-J."/>
            <person name="Wang H.-M."/>
            <person name="Ernberg I."/>
            <person name="Zeng Y.-X."/>
        </authorList>
    </citation>
    <scope>NUCLEOTIDE SEQUENCE [LARGE SCALE GENOMIC DNA]</scope>
</reference>
<keyword id="KW-0002">3D-structure</keyword>
<keyword id="KW-0025">Alternative splicing</keyword>
<keyword id="KW-0325">Glycoprotein</keyword>
<keyword id="KW-1043">Host membrane</keyword>
<keyword id="KW-0945">Host-virus interaction</keyword>
<keyword id="KW-0426">Late protein</keyword>
<keyword id="KW-0472">Membrane</keyword>
<keyword id="KW-0812">Transmembrane</keyword>
<keyword id="KW-1133">Transmembrane helix</keyword>
<keyword id="KW-0946">Virion</keyword>
<organismHost>
    <name type="scientific">Homo sapiens</name>
    <name type="common">Human</name>
    <dbReference type="NCBI Taxonomy" id="9606"/>
</organismHost>
<sequence length="856" mass="89423">MEAALLVCQYTIQSLIHLTGEDPGFFNVEIPEFPFYPTCNVCTADVNVTINFDVGGKKHQLDLDFGQLTPHTKAVYQPRGAFGGSENATNLFLLELLGAGELALTMRSKKLPINVTTGEEQQVSLESVDVYFQDVFGTMWCHHAEMQNPVYLIPETVPYIKWDNCNSTNITAVVRAQGLDVTLPLSLPTSAQDSNFSVKTQMLGNEIDIECIMEDGEISQVLPGDNKFNITCSGYESHVPSGGILTSTSPVVTPIPGTGYAYSLRLTPRPVSRFLGNNSILYVFYSGNGPKASGGDYCIQSNIVFSDEIPASQDMPTNTTDITYVGDNATYSVPMVTSEDANSPNVTVTAFWAWPNNTETDFKCKWTLTSGTPSGCENISGAFASNRTFDITVSGLGTAPKTLIITRTATNATTTTHKVIFSKAPESTTTSPTSNTTGFAAPNTTTGLPSSTHVPTNLTAPASTGPTVSTADVTSPTPAGTTSGASPVTPSPSPRDNGTESKAPDMTSPTPAVTTPTPNATSPTSAVTTPTPNATSPTLGKTSPTSAVTTPTPNATSPTSAVTTPTPNATGPTVGETSPQANTTNHTLGGTSSTPVVTSQPKNATSAVTTGQHNITSSSTSSMSLRPSSISETTSHMPLLTSAHPTGGENITQVTPASTSTHHVSTSSPAPRPGTTSQASGPGNSSTSTKPGEVNVTKGTPPKNATSPQAPSGQKTAVPTVTSTGGKANSTTGGKHTTGHGARTSTEPTTDYGGDSTTPRTRYNATTYLPPSTSSELRPRWTFTSPPVTTAQATVPVPPTSQPRFSNLSMLVLQWASLAVLTLLLLLVMADCAFRRNLSTSHTYTTPPYDDAETYV</sequence>
<organism>
    <name type="scientific">Epstein-Barr virus (strain GD1)</name>
    <name type="common">HHV-4</name>
    <name type="synonym">Human gammaherpesvirus 4</name>
    <dbReference type="NCBI Taxonomy" id="10376"/>
    <lineage>
        <taxon>Viruses</taxon>
        <taxon>Duplodnaviria</taxon>
        <taxon>Heunggongvirae</taxon>
        <taxon>Peploviricota</taxon>
        <taxon>Herviviricetes</taxon>
        <taxon>Herpesvirales</taxon>
        <taxon>Orthoherpesviridae</taxon>
        <taxon>Gammaherpesvirinae</taxon>
        <taxon>Lymphocryptovirus</taxon>
        <taxon>Lymphocryptovirus humangamma4</taxon>
    </lineage>
</organism>
<proteinExistence type="evidence at protein level"/>
<evidence type="ECO:0000250" key="1"/>
<evidence type="ECO:0000255" key="2"/>
<evidence type="ECO:0000256" key="3">
    <source>
        <dbReference type="SAM" id="MobiDB-lite"/>
    </source>
</evidence>
<evidence type="ECO:0000305" key="4"/>
<accession>Q3KST4</accession>
<name>GP350_EBVG</name>
<comment type="function">
    <text evidence="1">Initiates virion attachment to host B-lymphocyte cell, leading to virus entry. Acts by binding to host CR2 at the surface of B-lymphocytes, facilitating the binding of viral glycoprotein gp42 to HLA class II molecules. Attachment triggers virion-host membrane fusion and invasion of the host cell (By similarity).</text>
</comment>
<comment type="subunit">
    <text evidence="1">Interacts with host CR2.</text>
</comment>
<comment type="subcellular location">
    <subcellularLocation>
        <location>Virion membrane</location>
        <topology>Single-pass membrane protein</topology>
    </subcellularLocation>
    <subcellularLocation>
        <location>Host membrane</location>
        <topology>Single-pass membrane protein</topology>
    </subcellularLocation>
    <text evidence="1">Most abundant component of the viral envelope.</text>
</comment>
<comment type="alternative products">
    <event type="alternative splicing"/>
    <isoform>
        <id>Q3KST4-1</id>
        <name>GP350</name>
        <sequence type="displayed"/>
    </isoform>
    <isoform>
        <id>Q3KST4-2</id>
        <name>GP220</name>
        <sequence type="described" ref="VSP_041036"/>
    </isoform>
</comment>
<comment type="PTM">
    <text evidence="1">Extensively glycosylated.</text>
</comment>
<comment type="biotechnology">
    <text>Primary surface antigen capable of inducing and reacting with virus-neutralizing antibodies. Almost all EBV candidate vaccines are based on gp350 proteins.</text>
</comment>
<comment type="similarity">
    <text evidence="4">Belongs to the Epstein-Barr GP350 family.</text>
</comment>
<dbReference type="EMBL" id="AY961628">
    <property type="protein sequence ID" value="AAY41116.1"/>
    <property type="molecule type" value="Genomic_DNA"/>
</dbReference>
<dbReference type="PDB" id="8ZNI">
    <property type="method" value="EM"/>
    <property type="resolution" value="3.29 A"/>
    <property type="chains" value="B=2-808"/>
</dbReference>
<dbReference type="PDBsum" id="8ZNI"/>
<dbReference type="SMR" id="Q3KST4"/>
<dbReference type="Proteomes" id="UP000007641">
    <property type="component" value="Genome"/>
</dbReference>
<dbReference type="GO" id="GO:0033644">
    <property type="term" value="C:host cell membrane"/>
    <property type="evidence" value="ECO:0007669"/>
    <property type="project" value="UniProtKB-SubCell"/>
</dbReference>
<dbReference type="GO" id="GO:0016020">
    <property type="term" value="C:membrane"/>
    <property type="evidence" value="ECO:0007669"/>
    <property type="project" value="UniProtKB-KW"/>
</dbReference>
<dbReference type="GO" id="GO:0055036">
    <property type="term" value="C:virion membrane"/>
    <property type="evidence" value="ECO:0007669"/>
    <property type="project" value="UniProtKB-SubCell"/>
</dbReference>
<dbReference type="Gene3D" id="2.60.40.2800">
    <property type="match status" value="1"/>
</dbReference>
<dbReference type="Gene3D" id="2.60.40.2810">
    <property type="match status" value="1"/>
</dbReference>
<dbReference type="Gene3D" id="2.60.40.2820">
    <property type="match status" value="1"/>
</dbReference>
<dbReference type="InterPro" id="IPR048692">
    <property type="entry name" value="GP350_C_dom_herpes"/>
</dbReference>
<dbReference type="InterPro" id="IPR048698">
    <property type="entry name" value="GP350_C_dom_herpes_sf"/>
</dbReference>
<dbReference type="InterPro" id="IPR007796">
    <property type="entry name" value="GP350_N_A_dom_herpes"/>
</dbReference>
<dbReference type="InterPro" id="IPR048700">
    <property type="entry name" value="GP350_N_A_dom_herpes_sf"/>
</dbReference>
<dbReference type="InterPro" id="IPR048689">
    <property type="entry name" value="GP350_N_B_dom_herpes"/>
</dbReference>
<dbReference type="Pfam" id="PF05109">
    <property type="entry name" value="Herpes_gp350_A"/>
    <property type="match status" value="1"/>
</dbReference>
<dbReference type="Pfam" id="PF20676">
    <property type="entry name" value="Herpes_gp350_B"/>
    <property type="match status" value="1"/>
</dbReference>
<dbReference type="Pfam" id="PF20677">
    <property type="entry name" value="Herpes_gp350_C"/>
    <property type="match status" value="1"/>
</dbReference>
<dbReference type="Pfam" id="PF20678">
    <property type="entry name" value="HV_Gp350_C-term"/>
    <property type="match status" value="2"/>
</dbReference>